<gene>
    <name type="ORF">Tc00.1047053506743.170</name>
</gene>
<feature type="chain" id="PRO_0000414152" description="tRNA (guanine(37)-N(1))-methyltransferase 2">
    <location>
        <begin position="1"/>
        <end position="508"/>
    </location>
</feature>
<feature type="region of interest" description="Disordered" evidence="2">
    <location>
        <begin position="1"/>
        <end position="25"/>
    </location>
</feature>
<feature type="binding site" evidence="1">
    <location>
        <position position="285"/>
    </location>
    <ligand>
        <name>S-adenosyl-L-methionine</name>
        <dbReference type="ChEBI" id="CHEBI:59789"/>
    </ligand>
</feature>
<feature type="binding site" evidence="1">
    <location>
        <begin position="323"/>
        <end position="324"/>
    </location>
    <ligand>
        <name>S-adenosyl-L-methionine</name>
        <dbReference type="ChEBI" id="CHEBI:59789"/>
    </ligand>
</feature>
<feature type="binding site" evidence="1">
    <location>
        <begin position="352"/>
        <end position="353"/>
    </location>
    <ligand>
        <name>S-adenosyl-L-methionine</name>
        <dbReference type="ChEBI" id="CHEBI:59789"/>
    </ligand>
</feature>
<feature type="binding site" evidence="1">
    <location>
        <position position="380"/>
    </location>
    <ligand>
        <name>S-adenosyl-L-methionine</name>
        <dbReference type="ChEBI" id="CHEBI:59789"/>
    </ligand>
</feature>
<dbReference type="EC" id="2.1.1.228" evidence="1"/>
<dbReference type="EMBL" id="AAHK01000273">
    <property type="protein sequence ID" value="EAN94498.1"/>
    <property type="molecule type" value="Genomic_DNA"/>
</dbReference>
<dbReference type="RefSeq" id="XP_816349.1">
    <property type="nucleotide sequence ID" value="XM_811256.1"/>
</dbReference>
<dbReference type="SMR" id="Q4DPN8"/>
<dbReference type="FunCoup" id="Q4DPN8">
    <property type="interactions" value="360"/>
</dbReference>
<dbReference type="STRING" id="353153.Q4DPN8"/>
<dbReference type="PaxDb" id="353153-Q4DPN8"/>
<dbReference type="EnsemblProtists" id="EAN94498">
    <property type="protein sequence ID" value="EAN94498"/>
    <property type="gene ID" value="Tc00.1047053506743.170"/>
</dbReference>
<dbReference type="GeneID" id="3548220"/>
<dbReference type="KEGG" id="tcr:506743.170"/>
<dbReference type="eggNOG" id="KOG2078">
    <property type="taxonomic scope" value="Eukaryota"/>
</dbReference>
<dbReference type="InParanoid" id="Q4DPN8"/>
<dbReference type="Proteomes" id="UP000002296">
    <property type="component" value="Unassembled WGS sequence"/>
</dbReference>
<dbReference type="GO" id="GO:0005759">
    <property type="term" value="C:mitochondrial matrix"/>
    <property type="evidence" value="ECO:0007669"/>
    <property type="project" value="UniProtKB-SubCell"/>
</dbReference>
<dbReference type="GO" id="GO:0005634">
    <property type="term" value="C:nucleus"/>
    <property type="evidence" value="ECO:0007669"/>
    <property type="project" value="UniProtKB-SubCell"/>
</dbReference>
<dbReference type="GO" id="GO:0052906">
    <property type="term" value="F:tRNA (guanine(37)-N1)-methyltransferase activity"/>
    <property type="evidence" value="ECO:0007669"/>
    <property type="project" value="UniProtKB-UniRule"/>
</dbReference>
<dbReference type="GO" id="GO:0002939">
    <property type="term" value="P:tRNA N1-guanine methylation"/>
    <property type="evidence" value="ECO:0007669"/>
    <property type="project" value="TreeGrafter"/>
</dbReference>
<dbReference type="FunFam" id="3.30.300.110:FF:000001">
    <property type="entry name" value="tRNA (guanine(37)-N1)-methyltransferase"/>
    <property type="match status" value="1"/>
</dbReference>
<dbReference type="Gene3D" id="3.30.300.110">
    <property type="entry name" value="Met-10+ protein-like domains"/>
    <property type="match status" value="1"/>
</dbReference>
<dbReference type="Gene3D" id="3.40.50.150">
    <property type="entry name" value="Vaccinia Virus protein VP39"/>
    <property type="match status" value="1"/>
</dbReference>
<dbReference type="HAMAP" id="MF_03152">
    <property type="entry name" value="TRM5"/>
    <property type="match status" value="1"/>
</dbReference>
<dbReference type="InterPro" id="IPR030382">
    <property type="entry name" value="MeTrfase_TRM5/TYW2"/>
</dbReference>
<dbReference type="InterPro" id="IPR029063">
    <property type="entry name" value="SAM-dependent_MTases_sf"/>
</dbReference>
<dbReference type="InterPro" id="IPR056743">
    <property type="entry name" value="TRM5-TYW2-like_MTfase"/>
</dbReference>
<dbReference type="InterPro" id="IPR056744">
    <property type="entry name" value="TRM5/TYW2-like_N"/>
</dbReference>
<dbReference type="InterPro" id="IPR025792">
    <property type="entry name" value="tRNA_Gua_MeTrfase_euk"/>
</dbReference>
<dbReference type="PANTHER" id="PTHR23245:SF43">
    <property type="entry name" value="TRNA (GUANINE(37)-N1)-METHYLTRANSFERASE 2"/>
    <property type="match status" value="1"/>
</dbReference>
<dbReference type="PANTHER" id="PTHR23245">
    <property type="entry name" value="TRNA METHYLTRANSFERASE"/>
    <property type="match status" value="1"/>
</dbReference>
<dbReference type="Pfam" id="PF02475">
    <property type="entry name" value="TRM5-TYW2_MTfase"/>
    <property type="match status" value="1"/>
</dbReference>
<dbReference type="Pfam" id="PF25133">
    <property type="entry name" value="TYW2_N_2"/>
    <property type="match status" value="1"/>
</dbReference>
<dbReference type="SUPFAM" id="SSF53335">
    <property type="entry name" value="S-adenosyl-L-methionine-dependent methyltransferases"/>
    <property type="match status" value="1"/>
</dbReference>
<dbReference type="PROSITE" id="PS51684">
    <property type="entry name" value="SAM_MT_TRM5_TYW2"/>
    <property type="match status" value="1"/>
</dbReference>
<proteinExistence type="inferred from homology"/>
<sequence length="508" mass="56666">MSGEERHQGGGEKGPMDHDEPPSYRTRVEASVELMALRVKPVHLLGEVLKALRGCLYDMRGVRNVMDAPQPTSDPGEEHKLLLLNPQVIPPPSSAAKNDSMAPTQPLWVEANHASVPPVVRERLQSFLLGKRSVAQSLRVAVAQHTVRLSHRNFTMPELLQRILPPGTIPLSGFEQVGHIAHVNLSAAHLPYRADIGAVILDCNPTVRVVVNKVDNIASVFREFKMEVIARRTTHSDMKGTPVKENSGDEEELHGLLLATVRQHGCIFRVPYDRVYWNSRLSHEHARVVGMMQSGDMLYDAMAGVGPFAIPAAVAGVKTYANDLNPVAAEYLRINAELNHINKDTFHVFNMDGREFLNTVLYRDVVSGAAVCGRRHVTMNLPAIAVEFLDVFTKPPWSQPLVSLSSLEEKAKEGKEKGEHVKMHPDKRLLFHVYCFSKNMDDFLGDAVKQVERWLAFSLAGENLEAVHMVRDVAPLKRMVCVSFTLPEAFWLHREAKGMSPLKRARSD</sequence>
<reference key="1">
    <citation type="journal article" date="2005" name="Science">
        <title>The genome sequence of Trypanosoma cruzi, etiologic agent of Chagas disease.</title>
        <authorList>
            <person name="El-Sayed N.M.A."/>
            <person name="Myler P.J."/>
            <person name="Bartholomeu D.C."/>
            <person name="Nilsson D."/>
            <person name="Aggarwal G."/>
            <person name="Tran A.-N."/>
            <person name="Ghedin E."/>
            <person name="Worthey E.A."/>
            <person name="Delcher A.L."/>
            <person name="Blandin G."/>
            <person name="Westenberger S.J."/>
            <person name="Caler E."/>
            <person name="Cerqueira G.C."/>
            <person name="Branche C."/>
            <person name="Haas B."/>
            <person name="Anupama A."/>
            <person name="Arner E."/>
            <person name="Aslund L."/>
            <person name="Attipoe P."/>
            <person name="Bontempi E."/>
            <person name="Bringaud F."/>
            <person name="Burton P."/>
            <person name="Cadag E."/>
            <person name="Campbell D.A."/>
            <person name="Carrington M."/>
            <person name="Crabtree J."/>
            <person name="Darban H."/>
            <person name="da Silveira J.F."/>
            <person name="de Jong P."/>
            <person name="Edwards K."/>
            <person name="Englund P.T."/>
            <person name="Fazelina G."/>
            <person name="Feldblyum T."/>
            <person name="Ferella M."/>
            <person name="Frasch A.C."/>
            <person name="Gull K."/>
            <person name="Horn D."/>
            <person name="Hou L."/>
            <person name="Huang Y."/>
            <person name="Kindlund E."/>
            <person name="Klingbeil M."/>
            <person name="Kluge S."/>
            <person name="Koo H."/>
            <person name="Lacerda D."/>
            <person name="Levin M.J."/>
            <person name="Lorenzi H."/>
            <person name="Louie T."/>
            <person name="Machado C.R."/>
            <person name="McCulloch R."/>
            <person name="McKenna A."/>
            <person name="Mizuno Y."/>
            <person name="Mottram J.C."/>
            <person name="Nelson S."/>
            <person name="Ochaya S."/>
            <person name="Osoegawa K."/>
            <person name="Pai G."/>
            <person name="Parsons M."/>
            <person name="Pentony M."/>
            <person name="Pettersson U."/>
            <person name="Pop M."/>
            <person name="Ramirez J.L."/>
            <person name="Rinta J."/>
            <person name="Robertson L."/>
            <person name="Salzberg S.L."/>
            <person name="Sanchez D.O."/>
            <person name="Seyler A."/>
            <person name="Sharma R."/>
            <person name="Shetty J."/>
            <person name="Simpson A.J."/>
            <person name="Sisk E."/>
            <person name="Tammi M.T."/>
            <person name="Tarleton R."/>
            <person name="Teixeira S."/>
            <person name="Van Aken S."/>
            <person name="Vogt C."/>
            <person name="Ward P.N."/>
            <person name="Wickstead B."/>
            <person name="Wortman J."/>
            <person name="White O."/>
            <person name="Fraser C.M."/>
            <person name="Stuart K.D."/>
            <person name="Andersson B."/>
        </authorList>
    </citation>
    <scope>NUCLEOTIDE SEQUENCE [LARGE SCALE GENOMIC DNA]</scope>
    <source>
        <strain>CL Brener</strain>
    </source>
</reference>
<comment type="function">
    <text evidence="1">Specifically methylates the N1 position of guanosine-37 in various cytoplasmic and mitochondrial tRNAs. Methylation is not dependent on the nature of the nucleoside 5' of the target nucleoside. This is the first step in the biosynthesis of wybutosine (yW), a modified base adjacent to the anticodon of tRNAs and required for accurate decoding.</text>
</comment>
<comment type="catalytic activity">
    <reaction evidence="1">
        <text>guanosine(37) in tRNA + S-adenosyl-L-methionine = N(1)-methylguanosine(37) in tRNA + S-adenosyl-L-homocysteine + H(+)</text>
        <dbReference type="Rhea" id="RHEA:36899"/>
        <dbReference type="Rhea" id="RHEA-COMP:10145"/>
        <dbReference type="Rhea" id="RHEA-COMP:10147"/>
        <dbReference type="ChEBI" id="CHEBI:15378"/>
        <dbReference type="ChEBI" id="CHEBI:57856"/>
        <dbReference type="ChEBI" id="CHEBI:59789"/>
        <dbReference type="ChEBI" id="CHEBI:73542"/>
        <dbReference type="ChEBI" id="CHEBI:74269"/>
        <dbReference type="EC" id="2.1.1.228"/>
    </reaction>
</comment>
<comment type="subunit">
    <text evidence="1">Monomer.</text>
</comment>
<comment type="subcellular location">
    <subcellularLocation>
        <location evidence="1">Mitochondrion matrix</location>
    </subcellularLocation>
    <subcellularLocation>
        <location evidence="1">Nucleus</location>
    </subcellularLocation>
    <subcellularLocation>
        <location evidence="1">Cytoplasm</location>
    </subcellularLocation>
    <text evidence="1">Predominantly in the mitochondria and in the nucleus.</text>
</comment>
<comment type="similarity">
    <text evidence="3">Belongs to the class I-like SAM-binding methyltransferase superfamily. TRM5/TYW2 family.</text>
</comment>
<protein>
    <recommendedName>
        <fullName evidence="1">tRNA (guanine(37)-N(1))-methyltransferase 2</fullName>
        <ecNumber evidence="1">2.1.1.228</ecNumber>
    </recommendedName>
    <alternativeName>
        <fullName evidence="1">M1G-methyltransferase 2</fullName>
    </alternativeName>
    <alternativeName>
        <fullName evidence="1">tRNA [GM37] methyltransferase 2</fullName>
    </alternativeName>
    <alternativeName>
        <fullName evidence="1">tRNA methyltransferase 5 homolog 2</fullName>
    </alternativeName>
</protein>
<evidence type="ECO:0000255" key="1">
    <source>
        <dbReference type="HAMAP-Rule" id="MF_03152"/>
    </source>
</evidence>
<evidence type="ECO:0000256" key="2">
    <source>
        <dbReference type="SAM" id="MobiDB-lite"/>
    </source>
</evidence>
<evidence type="ECO:0000305" key="3"/>
<keyword id="KW-0963">Cytoplasm</keyword>
<keyword id="KW-0489">Methyltransferase</keyword>
<keyword id="KW-0496">Mitochondrion</keyword>
<keyword id="KW-0539">Nucleus</keyword>
<keyword id="KW-1185">Reference proteome</keyword>
<keyword id="KW-0949">S-adenosyl-L-methionine</keyword>
<keyword id="KW-0808">Transferase</keyword>
<keyword id="KW-0819">tRNA processing</keyword>
<accession>Q4DPN8</accession>
<organism>
    <name type="scientific">Trypanosoma cruzi (strain CL Brener)</name>
    <dbReference type="NCBI Taxonomy" id="353153"/>
    <lineage>
        <taxon>Eukaryota</taxon>
        <taxon>Discoba</taxon>
        <taxon>Euglenozoa</taxon>
        <taxon>Kinetoplastea</taxon>
        <taxon>Metakinetoplastina</taxon>
        <taxon>Trypanosomatida</taxon>
        <taxon>Trypanosomatidae</taxon>
        <taxon>Trypanosoma</taxon>
        <taxon>Schizotrypanum</taxon>
    </lineage>
</organism>
<name>TRM52_TRYCC</name>